<comment type="function">
    <text evidence="3">Transcription factor (PubMed:17021039). Involved in negatively modulating apoptosis in germline and somatic cells, acting in partial redundancy with transcription factor egl-38/PAX5, probably by directly regulating transcription of apoptosis regulator ced-9 (PubMed:17021039). May bind to the DNA sequence motif 5'-GTAACG-3' in regulatory elements (PubMed:17021039).</text>
</comment>
<comment type="subcellular location">
    <subcellularLocation>
        <location evidence="1 5">Nucleus</location>
    </subcellularLocation>
    <subcellularLocation>
        <location evidence="3">Chromosome</location>
    </subcellularLocation>
</comment>
<comment type="alternative products">
    <event type="alternative splicing"/>
    <isoform>
        <id>Q21263-1</id>
        <name evidence="7">a</name>
        <sequence type="displayed"/>
    </isoform>
    <isoform>
        <id>Q21263-2</id>
        <name evidence="8">b</name>
        <sequence type="described" ref="VSP_061583"/>
    </isoform>
</comment>
<sequence>MFTKTFSNNYMTSSQSAYCNLQQYHDSRVCLLKCCRVQKVDPYFPRIALNSATSYPTVSGTVSLPKAETVEPDLWIKSFKGNEDPLLSDGSHTGVNQLGGVFVNGRPLPDTIRAQIVEMSQHGTRPCDISRQLKVSHGCVSKILGRYYSTGSVRPGVIGGSKPKVATPRVVECIAGYKRANPTMFAWEIRQKLIEDQICGEENVPSVSSINRIVRNKSFMAQLATPTSVTPSVARPSSATSQNQRSPPRGVQQHMQQSTSVQQLQQFQLTSAATVNSLISRPAFAIPGTTHSINGLLGTFPHSSLLDDKFTNLSTHSADMSLVYPTGLVGEHDWAMRTPMVILPQNYCGQL</sequence>
<feature type="chain" id="PRO_0000456084" description="Paired box protein 2 homolog">
    <location>
        <begin position="1"/>
        <end position="351"/>
    </location>
</feature>
<feature type="DNA-binding region" description="Paired" evidence="1">
    <location>
        <begin position="91"/>
        <end position="217"/>
    </location>
</feature>
<feature type="region of interest" description="PAI subdomain" evidence="1">
    <location>
        <begin position="94"/>
        <end position="150"/>
    </location>
</feature>
<feature type="region of interest" description="RED subdomain" evidence="1">
    <location>
        <begin position="169"/>
        <end position="217"/>
    </location>
</feature>
<feature type="region of interest" description="Disordered" evidence="2">
    <location>
        <begin position="226"/>
        <end position="258"/>
    </location>
</feature>
<feature type="compositionally biased region" description="Polar residues" evidence="2">
    <location>
        <begin position="226"/>
        <end position="246"/>
    </location>
</feature>
<feature type="splice variant" id="VSP_061583" description="In isoform b." evidence="4">
    <original>MFTKTFSNNYMTSSQSAYCNLQQYHDSRVCLLKCCRVQKVDPYFPRIALNSATSYPTVSGTVSLPKAETVEPDLWIKSFKGNE</original>
    <variation>METIWRNYSYSTYPSHHNFQL</variation>
    <location>
        <begin position="1"/>
        <end position="83"/>
    </location>
</feature>
<name>PAX2H_CAEEL</name>
<proteinExistence type="inferred from homology"/>
<accession>Q21263</accession>
<accession>U4PCL3</accession>
<evidence type="ECO:0000255" key="1">
    <source>
        <dbReference type="PROSITE-ProRule" id="PRU00381"/>
    </source>
</evidence>
<evidence type="ECO:0000256" key="2">
    <source>
        <dbReference type="SAM" id="MobiDB-lite"/>
    </source>
</evidence>
<evidence type="ECO:0000269" key="3">
    <source>
    </source>
</evidence>
<evidence type="ECO:0000305" key="4"/>
<evidence type="ECO:0000305" key="5">
    <source>
    </source>
</evidence>
<evidence type="ECO:0000312" key="6">
    <source>
        <dbReference type="Proteomes" id="UP000001940"/>
    </source>
</evidence>
<evidence type="ECO:0000312" key="7">
    <source>
        <dbReference type="WormBase" id="K06B9.5a"/>
    </source>
</evidence>
<evidence type="ECO:0000312" key="8">
    <source>
        <dbReference type="WormBase" id="K06B9.5b"/>
    </source>
</evidence>
<gene>
    <name evidence="7" type="primary">pax-2</name>
    <name evidence="7" type="ORF">K06B9.5</name>
</gene>
<dbReference type="EMBL" id="BX284604">
    <property type="protein sequence ID" value="CCD70278.1"/>
    <property type="molecule type" value="Genomic_DNA"/>
</dbReference>
<dbReference type="EMBL" id="BX284604">
    <property type="protein sequence ID" value="CDH93478.1"/>
    <property type="molecule type" value="Genomic_DNA"/>
</dbReference>
<dbReference type="PIR" id="T29502">
    <property type="entry name" value="T29502"/>
</dbReference>
<dbReference type="RefSeq" id="NP_001294650.1">
    <molecule id="Q21263-2"/>
    <property type="nucleotide sequence ID" value="NM_001307721.3"/>
</dbReference>
<dbReference type="RefSeq" id="NP_500513.1">
    <molecule id="Q21263-1"/>
    <property type="nucleotide sequence ID" value="NM_068112.4"/>
</dbReference>
<dbReference type="SMR" id="Q21263"/>
<dbReference type="FunCoup" id="Q21263">
    <property type="interactions" value="1"/>
</dbReference>
<dbReference type="IntAct" id="Q21263">
    <property type="interactions" value="5"/>
</dbReference>
<dbReference type="STRING" id="6239.K06B9.5a.1"/>
<dbReference type="PaxDb" id="6239-K06B9.5a"/>
<dbReference type="EnsemblMetazoa" id="K06B9.5a.1">
    <molecule id="Q21263-1"/>
    <property type="protein sequence ID" value="K06B9.5a.1"/>
    <property type="gene ID" value="WBGene00003938"/>
</dbReference>
<dbReference type="EnsemblMetazoa" id="K06B9.5b.1">
    <molecule id="Q21263-2"/>
    <property type="protein sequence ID" value="K06B9.5b.1"/>
    <property type="gene ID" value="WBGene00003938"/>
</dbReference>
<dbReference type="GeneID" id="187062"/>
<dbReference type="KEGG" id="cel:CELE_K06B9.5"/>
<dbReference type="UCSC" id="K06B9.5">
    <molecule id="Q21263-1"/>
    <property type="organism name" value="c. elegans"/>
</dbReference>
<dbReference type="AGR" id="WB:WBGene00003938"/>
<dbReference type="CTD" id="187062"/>
<dbReference type="WormBase" id="K06B9.5a">
    <molecule id="Q21263-1"/>
    <property type="protein sequence ID" value="CE29504"/>
    <property type="gene ID" value="WBGene00003938"/>
    <property type="gene designation" value="pax-2"/>
</dbReference>
<dbReference type="WormBase" id="K06B9.5b">
    <molecule id="Q21263-2"/>
    <property type="protein sequence ID" value="CE48918"/>
    <property type="gene ID" value="WBGene00003938"/>
    <property type="gene designation" value="pax-2"/>
</dbReference>
<dbReference type="eggNOG" id="KOG3862">
    <property type="taxonomic scope" value="Eukaryota"/>
</dbReference>
<dbReference type="GeneTree" id="ENSGT00940000165812"/>
<dbReference type="HOGENOM" id="CLU_915967_0_0_1"/>
<dbReference type="InParanoid" id="Q21263"/>
<dbReference type="OrthoDB" id="3225452at2759"/>
<dbReference type="PhylomeDB" id="Q21263"/>
<dbReference type="Reactome" id="R-CEL-8939245">
    <property type="pathway name" value="RUNX1 regulates transcription of genes involved in BCR signaling"/>
</dbReference>
<dbReference type="PRO" id="PR:Q21263"/>
<dbReference type="Proteomes" id="UP000001940">
    <property type="component" value="Chromosome IV"/>
</dbReference>
<dbReference type="Bgee" id="WBGene00003938">
    <property type="expression patterns" value="Expressed in larva"/>
</dbReference>
<dbReference type="ExpressionAtlas" id="Q21263">
    <property type="expression patterns" value="baseline and differential"/>
</dbReference>
<dbReference type="GO" id="GO:0000785">
    <property type="term" value="C:chromatin"/>
    <property type="evidence" value="ECO:0000314"/>
    <property type="project" value="UniProtKB"/>
</dbReference>
<dbReference type="GO" id="GO:0005634">
    <property type="term" value="C:nucleus"/>
    <property type="evidence" value="ECO:0007669"/>
    <property type="project" value="UniProtKB-SubCell"/>
</dbReference>
<dbReference type="GO" id="GO:0000981">
    <property type="term" value="F:DNA-binding transcription factor activity, RNA polymerase II-specific"/>
    <property type="evidence" value="ECO:0000318"/>
    <property type="project" value="GO_Central"/>
</dbReference>
<dbReference type="GO" id="GO:0000978">
    <property type="term" value="F:RNA polymerase II cis-regulatory region sequence-specific DNA binding"/>
    <property type="evidence" value="ECO:0000314"/>
    <property type="project" value="UniProtKB"/>
</dbReference>
<dbReference type="GO" id="GO:0006915">
    <property type="term" value="P:apoptotic process"/>
    <property type="evidence" value="ECO:0000315"/>
    <property type="project" value="UniProtKB"/>
</dbReference>
<dbReference type="GO" id="GO:0045944">
    <property type="term" value="P:positive regulation of transcription by RNA polymerase II"/>
    <property type="evidence" value="ECO:0000315"/>
    <property type="project" value="UniProtKB"/>
</dbReference>
<dbReference type="GO" id="GO:0006357">
    <property type="term" value="P:regulation of transcription by RNA polymerase II"/>
    <property type="evidence" value="ECO:0000318"/>
    <property type="project" value="GO_Central"/>
</dbReference>
<dbReference type="CDD" id="cd00131">
    <property type="entry name" value="PAX"/>
    <property type="match status" value="1"/>
</dbReference>
<dbReference type="FunFam" id="1.10.10.10:FF:000003">
    <property type="entry name" value="Paired box protein Pax-6"/>
    <property type="match status" value="1"/>
</dbReference>
<dbReference type="FunFam" id="1.10.10.10:FF:000084">
    <property type="entry name" value="paired box protein Pax-9"/>
    <property type="match status" value="1"/>
</dbReference>
<dbReference type="Gene3D" id="1.10.10.10">
    <property type="entry name" value="Winged helix-like DNA-binding domain superfamily/Winged helix DNA-binding domain"/>
    <property type="match status" value="2"/>
</dbReference>
<dbReference type="InterPro" id="IPR009057">
    <property type="entry name" value="Homeodomain-like_sf"/>
</dbReference>
<dbReference type="InterPro" id="IPR043182">
    <property type="entry name" value="PAIRED_DNA-bd_dom"/>
</dbReference>
<dbReference type="InterPro" id="IPR001523">
    <property type="entry name" value="Paired_dom"/>
</dbReference>
<dbReference type="InterPro" id="IPR043565">
    <property type="entry name" value="PAX_fam"/>
</dbReference>
<dbReference type="InterPro" id="IPR036388">
    <property type="entry name" value="WH-like_DNA-bd_sf"/>
</dbReference>
<dbReference type="PANTHER" id="PTHR45636:SF31">
    <property type="entry name" value="PAIRED BOX PROTEIN 2 HOMOLOG-RELATED"/>
    <property type="match status" value="1"/>
</dbReference>
<dbReference type="PANTHER" id="PTHR45636">
    <property type="entry name" value="PAIRED BOX PROTEIN PAX-6-RELATED-RELATED"/>
    <property type="match status" value="1"/>
</dbReference>
<dbReference type="Pfam" id="PF00292">
    <property type="entry name" value="PAX"/>
    <property type="match status" value="1"/>
</dbReference>
<dbReference type="PRINTS" id="PR00027">
    <property type="entry name" value="PAIREDBOX"/>
</dbReference>
<dbReference type="SMART" id="SM00351">
    <property type="entry name" value="PAX"/>
    <property type="match status" value="1"/>
</dbReference>
<dbReference type="SUPFAM" id="SSF46689">
    <property type="entry name" value="Homeodomain-like"/>
    <property type="match status" value="1"/>
</dbReference>
<dbReference type="PROSITE" id="PS00034">
    <property type="entry name" value="PAIRED_1"/>
    <property type="match status" value="1"/>
</dbReference>
<dbReference type="PROSITE" id="PS51057">
    <property type="entry name" value="PAIRED_2"/>
    <property type="match status" value="1"/>
</dbReference>
<reference evidence="6" key="1">
    <citation type="journal article" date="1998" name="Science">
        <title>Genome sequence of the nematode C. elegans: a platform for investigating biology.</title>
        <authorList>
            <consortium name="The C. elegans sequencing consortium"/>
        </authorList>
    </citation>
    <scope>NUCLEOTIDE SEQUENCE [LARGE SCALE GENOMIC DNA]</scope>
    <source>
        <strain evidence="6">Bristol N2</strain>
    </source>
</reference>
<reference evidence="4" key="2">
    <citation type="journal article" date="2006" name="Development">
        <title>Pax2/5/8 proteins promote cell survival in C. elegans.</title>
        <authorList>
            <person name="Park D."/>
            <person name="Jia H."/>
            <person name="Rajakumar V."/>
            <person name="Chamberlin H.M."/>
        </authorList>
    </citation>
    <scope>FUNCTION</scope>
    <scope>SUBCELLULAR LOCATION</scope>
</reference>
<organism evidence="6">
    <name type="scientific">Caenorhabditis elegans</name>
    <dbReference type="NCBI Taxonomy" id="6239"/>
    <lineage>
        <taxon>Eukaryota</taxon>
        <taxon>Metazoa</taxon>
        <taxon>Ecdysozoa</taxon>
        <taxon>Nematoda</taxon>
        <taxon>Chromadorea</taxon>
        <taxon>Rhabditida</taxon>
        <taxon>Rhabditina</taxon>
        <taxon>Rhabditomorpha</taxon>
        <taxon>Rhabditoidea</taxon>
        <taxon>Rhabditidae</taxon>
        <taxon>Peloderinae</taxon>
        <taxon>Caenorhabditis</taxon>
    </lineage>
</organism>
<keyword id="KW-0025">Alternative splicing</keyword>
<keyword id="KW-0158">Chromosome</keyword>
<keyword id="KW-0217">Developmental protein</keyword>
<keyword id="KW-0238">DNA-binding</keyword>
<keyword id="KW-0539">Nucleus</keyword>
<keyword id="KW-0563">Paired box</keyword>
<keyword id="KW-1185">Reference proteome</keyword>
<keyword id="KW-0804">Transcription</keyword>
<keyword id="KW-0805">Transcription regulation</keyword>
<protein>
    <recommendedName>
        <fullName evidence="4">Paired box protein 2 homolog</fullName>
    </recommendedName>
    <alternativeName>
        <fullName evidence="7">Paired box transcription factor 2</fullName>
    </alternativeName>
</protein>